<keyword id="KW-0028">Amino-acid biosynthesis</keyword>
<keyword id="KW-0963">Cytoplasm</keyword>
<keyword id="KW-0554">One-carbon metabolism</keyword>
<keyword id="KW-0663">Pyridoxal phosphate</keyword>
<keyword id="KW-0808">Transferase</keyword>
<sequence>MSLEMFDKEIFDLTNKELERQCEGLEMIASENFTLPEVMEVMGSILTNKYAEGYPGKRYYGGCEFVDEIETLAIERCKKLFNCKFANVQPNSGSQANQGVYAALINPGDKILGMDLTHGGHLTHGAKVSSSGKMYESCFYGVELDGRIDYEKVREIAKKEKPKLIVCGASAYARVIDFAKFREIADEVGAYLFADIAHIAGLVVAGEHPSPFPHAHVVSSTTHKTLRGPRGGIIMTNDEQLAKKINSAIFPGIQGGPLMHVIAAKAVGFKFNLSDEWKVYAKQVRTNAQVLTNVLMDRKFKLVSDGTDNHLVLMSFLDREFSGKDADLALGNAGITANKNTVPGETRSPFITSGLRLGTPALTARGFKEKEMEIVSNYIADILDDINNEKLQENIKQELKKLASNFIIYERAMF</sequence>
<proteinExistence type="inferred from homology"/>
<reference key="1">
    <citation type="submission" date="2007-07" db="EMBL/GenBank/DDBJ databases">
        <title>Complete genome sequence of Campylobacter jejuni subsp doylei 269.97 isolated from human blood.</title>
        <authorList>
            <person name="Fouts D.E."/>
            <person name="Mongodin E.F."/>
            <person name="Puiu D."/>
            <person name="Sebastian Y."/>
            <person name="Miller W.G."/>
            <person name="Mandrell R.E."/>
            <person name="Lastovica A.J."/>
            <person name="Nelson K.E."/>
        </authorList>
    </citation>
    <scope>NUCLEOTIDE SEQUENCE [LARGE SCALE GENOMIC DNA]</scope>
    <source>
        <strain>ATCC BAA-1458 / RM4099 / 269.97</strain>
    </source>
</reference>
<organism>
    <name type="scientific">Campylobacter jejuni subsp. doylei (strain ATCC BAA-1458 / RM4099 / 269.97)</name>
    <dbReference type="NCBI Taxonomy" id="360109"/>
    <lineage>
        <taxon>Bacteria</taxon>
        <taxon>Pseudomonadati</taxon>
        <taxon>Campylobacterota</taxon>
        <taxon>Epsilonproteobacteria</taxon>
        <taxon>Campylobacterales</taxon>
        <taxon>Campylobacteraceae</taxon>
        <taxon>Campylobacter</taxon>
    </lineage>
</organism>
<name>GLYA_CAMJD</name>
<gene>
    <name evidence="1" type="primary">glyA</name>
    <name type="ordered locus">JJD26997_1555</name>
</gene>
<accession>A7H4X6</accession>
<protein>
    <recommendedName>
        <fullName evidence="1">Serine hydroxymethyltransferase</fullName>
        <shortName evidence="1">SHMT</shortName>
        <shortName evidence="1">Serine methylase</shortName>
        <ecNumber evidence="1">2.1.2.1</ecNumber>
    </recommendedName>
</protein>
<dbReference type="EC" id="2.1.2.1" evidence="1"/>
<dbReference type="EMBL" id="CP000768">
    <property type="protein sequence ID" value="ABS43141.1"/>
    <property type="molecule type" value="Genomic_DNA"/>
</dbReference>
<dbReference type="SMR" id="A7H4X6"/>
<dbReference type="KEGG" id="cjd:JJD26997_1555"/>
<dbReference type="HOGENOM" id="CLU_022477_2_1_7"/>
<dbReference type="UniPathway" id="UPA00193"/>
<dbReference type="UniPathway" id="UPA00288">
    <property type="reaction ID" value="UER01023"/>
</dbReference>
<dbReference type="Proteomes" id="UP000002302">
    <property type="component" value="Chromosome"/>
</dbReference>
<dbReference type="GO" id="GO:0005829">
    <property type="term" value="C:cytosol"/>
    <property type="evidence" value="ECO:0007669"/>
    <property type="project" value="TreeGrafter"/>
</dbReference>
<dbReference type="GO" id="GO:0004372">
    <property type="term" value="F:glycine hydroxymethyltransferase activity"/>
    <property type="evidence" value="ECO:0007669"/>
    <property type="project" value="UniProtKB-UniRule"/>
</dbReference>
<dbReference type="GO" id="GO:0030170">
    <property type="term" value="F:pyridoxal phosphate binding"/>
    <property type="evidence" value="ECO:0007669"/>
    <property type="project" value="UniProtKB-UniRule"/>
</dbReference>
<dbReference type="GO" id="GO:0019264">
    <property type="term" value="P:glycine biosynthetic process from serine"/>
    <property type="evidence" value="ECO:0007669"/>
    <property type="project" value="UniProtKB-UniRule"/>
</dbReference>
<dbReference type="GO" id="GO:0035999">
    <property type="term" value="P:tetrahydrofolate interconversion"/>
    <property type="evidence" value="ECO:0007669"/>
    <property type="project" value="UniProtKB-UniRule"/>
</dbReference>
<dbReference type="CDD" id="cd00378">
    <property type="entry name" value="SHMT"/>
    <property type="match status" value="1"/>
</dbReference>
<dbReference type="FunFam" id="3.40.640.10:FF:000001">
    <property type="entry name" value="Serine hydroxymethyltransferase"/>
    <property type="match status" value="1"/>
</dbReference>
<dbReference type="Gene3D" id="3.90.1150.10">
    <property type="entry name" value="Aspartate Aminotransferase, domain 1"/>
    <property type="match status" value="1"/>
</dbReference>
<dbReference type="Gene3D" id="3.40.640.10">
    <property type="entry name" value="Type I PLP-dependent aspartate aminotransferase-like (Major domain)"/>
    <property type="match status" value="1"/>
</dbReference>
<dbReference type="HAMAP" id="MF_00051">
    <property type="entry name" value="SHMT"/>
    <property type="match status" value="1"/>
</dbReference>
<dbReference type="InterPro" id="IPR015424">
    <property type="entry name" value="PyrdxlP-dep_Trfase"/>
</dbReference>
<dbReference type="InterPro" id="IPR015421">
    <property type="entry name" value="PyrdxlP-dep_Trfase_major"/>
</dbReference>
<dbReference type="InterPro" id="IPR015422">
    <property type="entry name" value="PyrdxlP-dep_Trfase_small"/>
</dbReference>
<dbReference type="InterPro" id="IPR001085">
    <property type="entry name" value="Ser_HO-MeTrfase"/>
</dbReference>
<dbReference type="InterPro" id="IPR049943">
    <property type="entry name" value="Ser_HO-MeTrfase-like"/>
</dbReference>
<dbReference type="InterPro" id="IPR019798">
    <property type="entry name" value="Ser_HO-MeTrfase_PLP_BS"/>
</dbReference>
<dbReference type="InterPro" id="IPR039429">
    <property type="entry name" value="SHMT-like_dom"/>
</dbReference>
<dbReference type="NCBIfam" id="NF000586">
    <property type="entry name" value="PRK00011.1"/>
    <property type="match status" value="1"/>
</dbReference>
<dbReference type="PANTHER" id="PTHR11680">
    <property type="entry name" value="SERINE HYDROXYMETHYLTRANSFERASE"/>
    <property type="match status" value="1"/>
</dbReference>
<dbReference type="PANTHER" id="PTHR11680:SF50">
    <property type="entry name" value="SERINE HYDROXYMETHYLTRANSFERASE"/>
    <property type="match status" value="1"/>
</dbReference>
<dbReference type="Pfam" id="PF00464">
    <property type="entry name" value="SHMT"/>
    <property type="match status" value="1"/>
</dbReference>
<dbReference type="PIRSF" id="PIRSF000412">
    <property type="entry name" value="SHMT"/>
    <property type="match status" value="1"/>
</dbReference>
<dbReference type="SUPFAM" id="SSF53383">
    <property type="entry name" value="PLP-dependent transferases"/>
    <property type="match status" value="1"/>
</dbReference>
<dbReference type="PROSITE" id="PS00096">
    <property type="entry name" value="SHMT"/>
    <property type="match status" value="1"/>
</dbReference>
<evidence type="ECO:0000255" key="1">
    <source>
        <dbReference type="HAMAP-Rule" id="MF_00051"/>
    </source>
</evidence>
<feature type="chain" id="PRO_1000006231" description="Serine hydroxymethyltransferase">
    <location>
        <begin position="1"/>
        <end position="414"/>
    </location>
</feature>
<feature type="binding site" evidence="1">
    <location>
        <position position="116"/>
    </location>
    <ligand>
        <name>(6S)-5,6,7,8-tetrahydrofolate</name>
        <dbReference type="ChEBI" id="CHEBI:57453"/>
    </ligand>
</feature>
<feature type="binding site" evidence="1">
    <location>
        <begin position="120"/>
        <end position="122"/>
    </location>
    <ligand>
        <name>(6S)-5,6,7,8-tetrahydrofolate</name>
        <dbReference type="ChEBI" id="CHEBI:57453"/>
    </ligand>
</feature>
<feature type="binding site" evidence="1">
    <location>
        <begin position="348"/>
        <end position="350"/>
    </location>
    <ligand>
        <name>(6S)-5,6,7,8-tetrahydrofolate</name>
        <dbReference type="ChEBI" id="CHEBI:57453"/>
    </ligand>
</feature>
<feature type="site" description="Plays an important role in substrate specificity" evidence="1">
    <location>
        <position position="223"/>
    </location>
</feature>
<feature type="modified residue" description="N6-(pyridoxal phosphate)lysine" evidence="1">
    <location>
        <position position="224"/>
    </location>
</feature>
<comment type="function">
    <text evidence="1">Catalyzes the reversible interconversion of serine and glycine with tetrahydrofolate (THF) serving as the one-carbon carrier. This reaction serves as the major source of one-carbon groups required for the biosynthesis of purines, thymidylate, methionine, and other important biomolecules. Also exhibits THF-independent aldolase activity toward beta-hydroxyamino acids, producing glycine and aldehydes, via a retro-aldol mechanism.</text>
</comment>
<comment type="catalytic activity">
    <reaction evidence="1">
        <text>(6R)-5,10-methylene-5,6,7,8-tetrahydrofolate + glycine + H2O = (6S)-5,6,7,8-tetrahydrofolate + L-serine</text>
        <dbReference type="Rhea" id="RHEA:15481"/>
        <dbReference type="ChEBI" id="CHEBI:15377"/>
        <dbReference type="ChEBI" id="CHEBI:15636"/>
        <dbReference type="ChEBI" id="CHEBI:33384"/>
        <dbReference type="ChEBI" id="CHEBI:57305"/>
        <dbReference type="ChEBI" id="CHEBI:57453"/>
        <dbReference type="EC" id="2.1.2.1"/>
    </reaction>
</comment>
<comment type="cofactor">
    <cofactor evidence="1">
        <name>pyridoxal 5'-phosphate</name>
        <dbReference type="ChEBI" id="CHEBI:597326"/>
    </cofactor>
</comment>
<comment type="pathway">
    <text evidence="1">One-carbon metabolism; tetrahydrofolate interconversion.</text>
</comment>
<comment type="pathway">
    <text evidence="1">Amino-acid biosynthesis; glycine biosynthesis; glycine from L-serine: step 1/1.</text>
</comment>
<comment type="subunit">
    <text evidence="1">Homodimer.</text>
</comment>
<comment type="subcellular location">
    <subcellularLocation>
        <location evidence="1">Cytoplasm</location>
    </subcellularLocation>
</comment>
<comment type="similarity">
    <text evidence="1">Belongs to the SHMT family.</text>
</comment>